<accession>A8FUH7</accession>
<sequence>MNSLSYLNHELERFPSPEYALTDPNGLLAIGGDLHPTRLLNAYYEGIFPWFNADDPILWWSPDPRAVFVPGTMKASRSLIKSLKKQTWTFTINRAFKEVMIGCAAPRAAQDGTWITQDIQHAYLELHKQGLAHSVEVWDEETLIGGLYGLAIGQVFCGESMFHTQTNASKAAMLVLHQYLLKQGFKLIDAQVVNPHLESLGATALKRKDFINLLKRFRDGKVASNSWVVKEVFLEL</sequence>
<proteinExistence type="inferred from homology"/>
<evidence type="ECO:0000255" key="1">
    <source>
        <dbReference type="HAMAP-Rule" id="MF_00688"/>
    </source>
</evidence>
<dbReference type="EC" id="2.3.2.6" evidence="1"/>
<dbReference type="EMBL" id="CP000821">
    <property type="protein sequence ID" value="ABV36500.1"/>
    <property type="molecule type" value="Genomic_DNA"/>
</dbReference>
<dbReference type="RefSeq" id="WP_012142235.1">
    <property type="nucleotide sequence ID" value="NC_009831.1"/>
</dbReference>
<dbReference type="SMR" id="A8FUH7"/>
<dbReference type="STRING" id="425104.Ssed_1889"/>
<dbReference type="KEGG" id="sse:Ssed_1889"/>
<dbReference type="eggNOG" id="COG2360">
    <property type="taxonomic scope" value="Bacteria"/>
</dbReference>
<dbReference type="HOGENOM" id="CLU_075045_0_0_6"/>
<dbReference type="OrthoDB" id="9790282at2"/>
<dbReference type="Proteomes" id="UP000002015">
    <property type="component" value="Chromosome"/>
</dbReference>
<dbReference type="GO" id="GO:0005737">
    <property type="term" value="C:cytoplasm"/>
    <property type="evidence" value="ECO:0007669"/>
    <property type="project" value="UniProtKB-SubCell"/>
</dbReference>
<dbReference type="GO" id="GO:0008914">
    <property type="term" value="F:leucyl-tRNA--protein transferase activity"/>
    <property type="evidence" value="ECO:0007669"/>
    <property type="project" value="UniProtKB-UniRule"/>
</dbReference>
<dbReference type="GO" id="GO:0030163">
    <property type="term" value="P:protein catabolic process"/>
    <property type="evidence" value="ECO:0007669"/>
    <property type="project" value="UniProtKB-UniRule"/>
</dbReference>
<dbReference type="FunFam" id="3.30.70.3550:FF:000001">
    <property type="entry name" value="Leucyl/phenylalanyl-tRNA--protein transferase"/>
    <property type="match status" value="1"/>
</dbReference>
<dbReference type="FunFam" id="3.40.630.70:FF:000001">
    <property type="entry name" value="Leucyl/phenylalanyl-tRNA--protein transferase"/>
    <property type="match status" value="1"/>
</dbReference>
<dbReference type="Gene3D" id="3.40.630.70">
    <property type="entry name" value="Leucyl/phenylalanyl-tRNA-protein transferase, C-terminal domain"/>
    <property type="match status" value="1"/>
</dbReference>
<dbReference type="Gene3D" id="3.30.70.3550">
    <property type="entry name" value="Leucyl/phenylalanyl-tRNA-protein transferase, N-terminal domain"/>
    <property type="match status" value="1"/>
</dbReference>
<dbReference type="HAMAP" id="MF_00688">
    <property type="entry name" value="Leu_Phe_trans"/>
    <property type="match status" value="1"/>
</dbReference>
<dbReference type="InterPro" id="IPR016181">
    <property type="entry name" value="Acyl_CoA_acyltransferase"/>
</dbReference>
<dbReference type="InterPro" id="IPR004616">
    <property type="entry name" value="Leu/Phe-tRNA_Trfase"/>
</dbReference>
<dbReference type="InterPro" id="IPR042203">
    <property type="entry name" value="Leu/Phe-tRNA_Trfase_C"/>
</dbReference>
<dbReference type="InterPro" id="IPR042221">
    <property type="entry name" value="Leu/Phe-tRNA_Trfase_N"/>
</dbReference>
<dbReference type="NCBIfam" id="TIGR00667">
    <property type="entry name" value="aat"/>
    <property type="match status" value="1"/>
</dbReference>
<dbReference type="PANTHER" id="PTHR30098">
    <property type="entry name" value="LEUCYL/PHENYLALANYL-TRNA--PROTEIN TRANSFERASE"/>
    <property type="match status" value="1"/>
</dbReference>
<dbReference type="PANTHER" id="PTHR30098:SF2">
    <property type="entry name" value="LEUCYL_PHENYLALANYL-TRNA--PROTEIN TRANSFERASE"/>
    <property type="match status" value="1"/>
</dbReference>
<dbReference type="Pfam" id="PF03588">
    <property type="entry name" value="Leu_Phe_trans"/>
    <property type="match status" value="1"/>
</dbReference>
<dbReference type="SUPFAM" id="SSF55729">
    <property type="entry name" value="Acyl-CoA N-acyltransferases (Nat)"/>
    <property type="match status" value="1"/>
</dbReference>
<organism>
    <name type="scientific">Shewanella sediminis (strain HAW-EB3)</name>
    <dbReference type="NCBI Taxonomy" id="425104"/>
    <lineage>
        <taxon>Bacteria</taxon>
        <taxon>Pseudomonadati</taxon>
        <taxon>Pseudomonadota</taxon>
        <taxon>Gammaproteobacteria</taxon>
        <taxon>Alteromonadales</taxon>
        <taxon>Shewanellaceae</taxon>
        <taxon>Shewanella</taxon>
    </lineage>
</organism>
<feature type="chain" id="PRO_1000083104" description="Leucyl/phenylalanyl-tRNA--protein transferase">
    <location>
        <begin position="1"/>
        <end position="236"/>
    </location>
</feature>
<reference key="1">
    <citation type="submission" date="2007-08" db="EMBL/GenBank/DDBJ databases">
        <title>Complete sequence of Shewanella sediminis HAW-EB3.</title>
        <authorList>
            <consortium name="US DOE Joint Genome Institute"/>
            <person name="Copeland A."/>
            <person name="Lucas S."/>
            <person name="Lapidus A."/>
            <person name="Barry K."/>
            <person name="Glavina del Rio T."/>
            <person name="Dalin E."/>
            <person name="Tice H."/>
            <person name="Pitluck S."/>
            <person name="Chertkov O."/>
            <person name="Brettin T."/>
            <person name="Bruce D."/>
            <person name="Detter J.C."/>
            <person name="Han C."/>
            <person name="Schmutz J."/>
            <person name="Larimer F."/>
            <person name="Land M."/>
            <person name="Hauser L."/>
            <person name="Kyrpides N."/>
            <person name="Kim E."/>
            <person name="Zhao J.-S."/>
            <person name="Richardson P."/>
        </authorList>
    </citation>
    <scope>NUCLEOTIDE SEQUENCE [LARGE SCALE GENOMIC DNA]</scope>
    <source>
        <strain>HAW-EB3</strain>
    </source>
</reference>
<comment type="function">
    <text evidence="1">Functions in the N-end rule pathway of protein degradation where it conjugates Leu, Phe and, less efficiently, Met from aminoacyl-tRNAs to the N-termini of proteins containing an N-terminal arginine or lysine.</text>
</comment>
<comment type="catalytic activity">
    <reaction evidence="1">
        <text>N-terminal L-lysyl-[protein] + L-leucyl-tRNA(Leu) = N-terminal L-leucyl-L-lysyl-[protein] + tRNA(Leu) + H(+)</text>
        <dbReference type="Rhea" id="RHEA:12340"/>
        <dbReference type="Rhea" id="RHEA-COMP:9613"/>
        <dbReference type="Rhea" id="RHEA-COMP:9622"/>
        <dbReference type="Rhea" id="RHEA-COMP:12670"/>
        <dbReference type="Rhea" id="RHEA-COMP:12671"/>
        <dbReference type="ChEBI" id="CHEBI:15378"/>
        <dbReference type="ChEBI" id="CHEBI:65249"/>
        <dbReference type="ChEBI" id="CHEBI:78442"/>
        <dbReference type="ChEBI" id="CHEBI:78494"/>
        <dbReference type="ChEBI" id="CHEBI:133043"/>
        <dbReference type="EC" id="2.3.2.6"/>
    </reaction>
</comment>
<comment type="catalytic activity">
    <reaction evidence="1">
        <text>N-terminal L-arginyl-[protein] + L-leucyl-tRNA(Leu) = N-terminal L-leucyl-L-arginyl-[protein] + tRNA(Leu) + H(+)</text>
        <dbReference type="Rhea" id="RHEA:50416"/>
        <dbReference type="Rhea" id="RHEA-COMP:9613"/>
        <dbReference type="Rhea" id="RHEA-COMP:9622"/>
        <dbReference type="Rhea" id="RHEA-COMP:12672"/>
        <dbReference type="Rhea" id="RHEA-COMP:12673"/>
        <dbReference type="ChEBI" id="CHEBI:15378"/>
        <dbReference type="ChEBI" id="CHEBI:64719"/>
        <dbReference type="ChEBI" id="CHEBI:78442"/>
        <dbReference type="ChEBI" id="CHEBI:78494"/>
        <dbReference type="ChEBI" id="CHEBI:133044"/>
        <dbReference type="EC" id="2.3.2.6"/>
    </reaction>
</comment>
<comment type="catalytic activity">
    <reaction evidence="1">
        <text>L-phenylalanyl-tRNA(Phe) + an N-terminal L-alpha-aminoacyl-[protein] = an N-terminal L-phenylalanyl-L-alpha-aminoacyl-[protein] + tRNA(Phe)</text>
        <dbReference type="Rhea" id="RHEA:43632"/>
        <dbReference type="Rhea" id="RHEA-COMP:9668"/>
        <dbReference type="Rhea" id="RHEA-COMP:9699"/>
        <dbReference type="Rhea" id="RHEA-COMP:10636"/>
        <dbReference type="Rhea" id="RHEA-COMP:10637"/>
        <dbReference type="ChEBI" id="CHEBI:78442"/>
        <dbReference type="ChEBI" id="CHEBI:78531"/>
        <dbReference type="ChEBI" id="CHEBI:78597"/>
        <dbReference type="ChEBI" id="CHEBI:83561"/>
        <dbReference type="EC" id="2.3.2.6"/>
    </reaction>
</comment>
<comment type="subcellular location">
    <subcellularLocation>
        <location evidence="1">Cytoplasm</location>
    </subcellularLocation>
</comment>
<comment type="similarity">
    <text evidence="1">Belongs to the L/F-transferase family.</text>
</comment>
<gene>
    <name evidence="1" type="primary">aat</name>
    <name type="ordered locus">Ssed_1889</name>
</gene>
<protein>
    <recommendedName>
        <fullName evidence="1">Leucyl/phenylalanyl-tRNA--protein transferase</fullName>
        <ecNumber evidence="1">2.3.2.6</ecNumber>
    </recommendedName>
    <alternativeName>
        <fullName evidence="1">L/F-transferase</fullName>
    </alternativeName>
    <alternativeName>
        <fullName evidence="1">Leucyltransferase</fullName>
    </alternativeName>
    <alternativeName>
        <fullName evidence="1">Phenyalanyltransferase</fullName>
    </alternativeName>
</protein>
<name>LFTR_SHESH</name>
<keyword id="KW-0012">Acyltransferase</keyword>
<keyword id="KW-0963">Cytoplasm</keyword>
<keyword id="KW-1185">Reference proteome</keyword>
<keyword id="KW-0808">Transferase</keyword>